<dbReference type="EC" id="6.2.1.1" evidence="1"/>
<dbReference type="EMBL" id="AM260522">
    <property type="protein sequence ID" value="CAJ99915.1"/>
    <property type="molecule type" value="Genomic_DNA"/>
</dbReference>
<dbReference type="RefSeq" id="WP_011578022.1">
    <property type="nucleotide sequence ID" value="NC_008229.1"/>
</dbReference>
<dbReference type="SMR" id="Q17WR1"/>
<dbReference type="STRING" id="382638.Hac_1156"/>
<dbReference type="GeneID" id="31758507"/>
<dbReference type="KEGG" id="hac:Hac_1156"/>
<dbReference type="eggNOG" id="COG0365">
    <property type="taxonomic scope" value="Bacteria"/>
</dbReference>
<dbReference type="HOGENOM" id="CLU_000022_3_6_7"/>
<dbReference type="OrthoDB" id="9765680at2"/>
<dbReference type="BioCyc" id="HACI382638:HAC_RS04975-MONOMER"/>
<dbReference type="Proteomes" id="UP000000775">
    <property type="component" value="Chromosome"/>
</dbReference>
<dbReference type="GO" id="GO:0005829">
    <property type="term" value="C:cytosol"/>
    <property type="evidence" value="ECO:0007669"/>
    <property type="project" value="TreeGrafter"/>
</dbReference>
<dbReference type="GO" id="GO:0003987">
    <property type="term" value="F:acetate-CoA ligase activity"/>
    <property type="evidence" value="ECO:0007669"/>
    <property type="project" value="UniProtKB-UniRule"/>
</dbReference>
<dbReference type="GO" id="GO:0016208">
    <property type="term" value="F:AMP binding"/>
    <property type="evidence" value="ECO:0007669"/>
    <property type="project" value="InterPro"/>
</dbReference>
<dbReference type="GO" id="GO:0005524">
    <property type="term" value="F:ATP binding"/>
    <property type="evidence" value="ECO:0007669"/>
    <property type="project" value="UniProtKB-KW"/>
</dbReference>
<dbReference type="GO" id="GO:0046872">
    <property type="term" value="F:metal ion binding"/>
    <property type="evidence" value="ECO:0007669"/>
    <property type="project" value="UniProtKB-KW"/>
</dbReference>
<dbReference type="GO" id="GO:0019427">
    <property type="term" value="P:acetyl-CoA biosynthetic process from acetate"/>
    <property type="evidence" value="ECO:0007669"/>
    <property type="project" value="InterPro"/>
</dbReference>
<dbReference type="CDD" id="cd05966">
    <property type="entry name" value="ACS"/>
    <property type="match status" value="1"/>
</dbReference>
<dbReference type="FunFam" id="3.40.50.12780:FF:000001">
    <property type="entry name" value="Acetyl-coenzyme A synthetase"/>
    <property type="match status" value="1"/>
</dbReference>
<dbReference type="Gene3D" id="3.30.300.30">
    <property type="match status" value="1"/>
</dbReference>
<dbReference type="Gene3D" id="3.40.50.12780">
    <property type="entry name" value="N-terminal domain of ligase-like"/>
    <property type="match status" value="1"/>
</dbReference>
<dbReference type="HAMAP" id="MF_01123">
    <property type="entry name" value="Ac_CoA_synth"/>
    <property type="match status" value="1"/>
</dbReference>
<dbReference type="InterPro" id="IPR011904">
    <property type="entry name" value="Ac_CoA_lig"/>
</dbReference>
<dbReference type="InterPro" id="IPR032387">
    <property type="entry name" value="ACAS_N"/>
</dbReference>
<dbReference type="InterPro" id="IPR025110">
    <property type="entry name" value="AMP-bd_C"/>
</dbReference>
<dbReference type="InterPro" id="IPR045851">
    <property type="entry name" value="AMP-bd_C_sf"/>
</dbReference>
<dbReference type="InterPro" id="IPR020845">
    <property type="entry name" value="AMP-binding_CS"/>
</dbReference>
<dbReference type="InterPro" id="IPR000873">
    <property type="entry name" value="AMP-dep_synth/lig_dom"/>
</dbReference>
<dbReference type="InterPro" id="IPR042099">
    <property type="entry name" value="ANL_N_sf"/>
</dbReference>
<dbReference type="NCBIfam" id="TIGR02188">
    <property type="entry name" value="Ac_CoA_lig_AcsA"/>
    <property type="match status" value="1"/>
</dbReference>
<dbReference type="NCBIfam" id="NF001208">
    <property type="entry name" value="PRK00174.1"/>
    <property type="match status" value="1"/>
</dbReference>
<dbReference type="PANTHER" id="PTHR24095">
    <property type="entry name" value="ACETYL-COENZYME A SYNTHETASE"/>
    <property type="match status" value="1"/>
</dbReference>
<dbReference type="PANTHER" id="PTHR24095:SF14">
    <property type="entry name" value="ACETYL-COENZYME A SYNTHETASE 1"/>
    <property type="match status" value="1"/>
</dbReference>
<dbReference type="Pfam" id="PF16177">
    <property type="entry name" value="ACAS_N"/>
    <property type="match status" value="1"/>
</dbReference>
<dbReference type="Pfam" id="PF00501">
    <property type="entry name" value="AMP-binding"/>
    <property type="match status" value="1"/>
</dbReference>
<dbReference type="Pfam" id="PF13193">
    <property type="entry name" value="AMP-binding_C"/>
    <property type="match status" value="1"/>
</dbReference>
<dbReference type="SUPFAM" id="SSF56801">
    <property type="entry name" value="Acetyl-CoA synthetase-like"/>
    <property type="match status" value="1"/>
</dbReference>
<dbReference type="PROSITE" id="PS00455">
    <property type="entry name" value="AMP_BINDING"/>
    <property type="match status" value="1"/>
</dbReference>
<name>ACSA_HELAH</name>
<evidence type="ECO:0000255" key="1">
    <source>
        <dbReference type="HAMAP-Rule" id="MF_01123"/>
    </source>
</evidence>
<comment type="function">
    <text evidence="1">Catalyzes the conversion of acetate into acetyl-CoA (AcCoA), an essential intermediate at the junction of anabolic and catabolic pathways. AcsA undergoes a two-step reaction. In the first half reaction, AcsA combines acetate with ATP to form acetyl-adenylate (AcAMP) intermediate. In the second half reaction, it can then transfer the acetyl group from AcAMP to the sulfhydryl group of CoA, forming the product AcCoA.</text>
</comment>
<comment type="catalytic activity">
    <reaction evidence="1">
        <text>acetate + ATP + CoA = acetyl-CoA + AMP + diphosphate</text>
        <dbReference type="Rhea" id="RHEA:23176"/>
        <dbReference type="ChEBI" id="CHEBI:30089"/>
        <dbReference type="ChEBI" id="CHEBI:30616"/>
        <dbReference type="ChEBI" id="CHEBI:33019"/>
        <dbReference type="ChEBI" id="CHEBI:57287"/>
        <dbReference type="ChEBI" id="CHEBI:57288"/>
        <dbReference type="ChEBI" id="CHEBI:456215"/>
        <dbReference type="EC" id="6.2.1.1"/>
    </reaction>
</comment>
<comment type="cofactor">
    <cofactor evidence="1">
        <name>Mg(2+)</name>
        <dbReference type="ChEBI" id="CHEBI:18420"/>
    </cofactor>
</comment>
<comment type="PTM">
    <text evidence="1">Acetylated. Deacetylation by the SIR2-homolog deacetylase activates the enzyme.</text>
</comment>
<comment type="similarity">
    <text evidence="1">Belongs to the ATP-dependent AMP-binding enzyme family.</text>
</comment>
<sequence length="662" mass="74921">MQLDDDLEFAKKIFNPNRAFAKQARIKNMCEYKDLVHEANENYENFWGELAKQKLTWFKPFDKVLNSDNAPFFKWFENGKINVSYNCIDRHLKDKKNKVAIIFEGEMGDYNAITYRKLHSEVNKTANLLKNEFNIKKGDRVIIYMPMIAESVYMMLACTRIGAIHSIVFAGFSPEALRDRINDAQAKLVITADGTFRKGKPYMLKPALDKALANNTCPSVEKTLIVIRNAKEIDYVRGRDFVYNEMVNYQSDKCEPEMMDSEDPLFLLYTSGSTGKPKGVQHSSAGYLLWAQMTMEWVFDIRDNDNFWCTADIGWITGHTYVVYGPLACGATTLILEGTMSYPDYGRWWRMIEEYRVDKFYTSPTAIRMLHAKGENEPSKYNLDSLKVLGTVGEPINPTAWKWFYEKIGNSQCSIVDTWWQTETGGHIISPLPGATPIRASCATLPLPGIHAEVLNEDGSKTKPGEQGFLCITKPWPSMIRNIWGDEKRYIDSYFSQIQLNGEYVYLSGDGAIVDENGYITIIGRTDDIVNVSGHRIGTAEVESAISKHEMVVECAVVGIPDTIKGEGLFAFVVLCDGAKCNLGESLELLKEMNHILAVEIGKIAKLDNVMYVPGLPKTRSGKIMRRILKSIVKKEPITQDLSTLEDVNVVKEIINIAQMEE</sequence>
<gene>
    <name evidence="1" type="primary">acsA</name>
    <name type="ordered locus">Hac_1156</name>
</gene>
<feature type="chain" id="PRO_1000065292" description="Acetyl-coenzyme A synthetase">
    <location>
        <begin position="1"/>
        <end position="662"/>
    </location>
</feature>
<feature type="binding site" evidence="1">
    <location>
        <begin position="197"/>
        <end position="200"/>
    </location>
    <ligand>
        <name>CoA</name>
        <dbReference type="ChEBI" id="CHEBI:57287"/>
    </ligand>
</feature>
<feature type="binding site" evidence="1">
    <location>
        <position position="317"/>
    </location>
    <ligand>
        <name>CoA</name>
        <dbReference type="ChEBI" id="CHEBI:57287"/>
    </ligand>
</feature>
<feature type="binding site" evidence="1">
    <location>
        <begin position="393"/>
        <end position="395"/>
    </location>
    <ligand>
        <name>ATP</name>
        <dbReference type="ChEBI" id="CHEBI:30616"/>
    </ligand>
</feature>
<feature type="binding site" evidence="1">
    <location>
        <begin position="417"/>
        <end position="422"/>
    </location>
    <ligand>
        <name>ATP</name>
        <dbReference type="ChEBI" id="CHEBI:30616"/>
    </ligand>
</feature>
<feature type="binding site" evidence="1">
    <location>
        <position position="510"/>
    </location>
    <ligand>
        <name>ATP</name>
        <dbReference type="ChEBI" id="CHEBI:30616"/>
    </ligand>
</feature>
<feature type="binding site" evidence="1">
    <location>
        <position position="525"/>
    </location>
    <ligand>
        <name>ATP</name>
        <dbReference type="ChEBI" id="CHEBI:30616"/>
    </ligand>
</feature>
<feature type="binding site" evidence="1">
    <location>
        <position position="533"/>
    </location>
    <ligand>
        <name>CoA</name>
        <dbReference type="ChEBI" id="CHEBI:57287"/>
    </ligand>
</feature>
<feature type="binding site" evidence="1">
    <location>
        <position position="536"/>
    </location>
    <ligand>
        <name>ATP</name>
        <dbReference type="ChEBI" id="CHEBI:30616"/>
    </ligand>
</feature>
<feature type="binding site" evidence="1">
    <location>
        <position position="549"/>
    </location>
    <ligand>
        <name>Mg(2+)</name>
        <dbReference type="ChEBI" id="CHEBI:18420"/>
    </ligand>
</feature>
<feature type="binding site" evidence="1">
    <location>
        <position position="552"/>
    </location>
    <ligand>
        <name>Mg(2+)</name>
        <dbReference type="ChEBI" id="CHEBI:18420"/>
    </ligand>
</feature>
<feature type="modified residue" description="N6-acetyllysine" evidence="1">
    <location>
        <position position="623"/>
    </location>
</feature>
<protein>
    <recommendedName>
        <fullName evidence="1">Acetyl-coenzyme A synthetase</fullName>
        <shortName evidence="1">AcCoA synthetase</shortName>
        <shortName evidence="1">Acs</shortName>
        <ecNumber evidence="1">6.2.1.1</ecNumber>
    </recommendedName>
    <alternativeName>
        <fullName evidence="1">Acetate--CoA ligase</fullName>
    </alternativeName>
    <alternativeName>
        <fullName evidence="1">Acyl-activating enzyme</fullName>
    </alternativeName>
</protein>
<organism>
    <name type="scientific">Helicobacter acinonychis (strain Sheeba)</name>
    <dbReference type="NCBI Taxonomy" id="382638"/>
    <lineage>
        <taxon>Bacteria</taxon>
        <taxon>Pseudomonadati</taxon>
        <taxon>Campylobacterota</taxon>
        <taxon>Epsilonproteobacteria</taxon>
        <taxon>Campylobacterales</taxon>
        <taxon>Helicobacteraceae</taxon>
        <taxon>Helicobacter</taxon>
    </lineage>
</organism>
<accession>Q17WR1</accession>
<reference key="1">
    <citation type="journal article" date="2006" name="PLoS Genet.">
        <title>Who ate whom? Adaptive Helicobacter genomic changes that accompanied a host jump from early humans to large felines.</title>
        <authorList>
            <person name="Eppinger M."/>
            <person name="Baar C."/>
            <person name="Linz B."/>
            <person name="Raddatz G."/>
            <person name="Lanz C."/>
            <person name="Keller H."/>
            <person name="Morelli G."/>
            <person name="Gressmann H."/>
            <person name="Achtman M."/>
            <person name="Schuster S.C."/>
        </authorList>
    </citation>
    <scope>NUCLEOTIDE SEQUENCE [LARGE SCALE GENOMIC DNA]</scope>
    <source>
        <strain>Sheeba</strain>
    </source>
</reference>
<keyword id="KW-0007">Acetylation</keyword>
<keyword id="KW-0067">ATP-binding</keyword>
<keyword id="KW-0436">Ligase</keyword>
<keyword id="KW-0460">Magnesium</keyword>
<keyword id="KW-0479">Metal-binding</keyword>
<keyword id="KW-0547">Nucleotide-binding</keyword>
<proteinExistence type="inferred from homology"/>